<sequence>MKFVDEVRIHVKAGDGGNGAVAWRREKFIPRGGPAGGDGGNGADVVLVVDPQLSTLLDYRYVREHRAKSGEHGQGSDMNGRDGEPLVLRVPPGTVVKDAATGELIADLGAADERLVVAKGGRGGLGNMNFATSTNQAPRYAEDGTLGEERDLVLELKLLADVGIVGYPNAGKSTLISRISRARPKIADYPFTTLVPNLGVVSWRERSFVVADIPGLIEGAHEGAGLGHQFLRHVERCRVLVHLVEGANPEEGRSPKADYEAINRELALYSPTLAEKPQILAVTKIDVPEARAAGEKLRKAFARRKQPVEVHLVSAVTGEGMPELMDAVGRALYAEAPRRGGRGRRLGKPRAEK</sequence>
<feature type="chain" id="PRO_0000385694" description="GTPase Obg">
    <location>
        <begin position="1"/>
        <end position="353"/>
    </location>
</feature>
<feature type="domain" description="Obg" evidence="2">
    <location>
        <begin position="1"/>
        <end position="159"/>
    </location>
</feature>
<feature type="domain" description="OBG-type G" evidence="1">
    <location>
        <begin position="160"/>
        <end position="333"/>
    </location>
</feature>
<feature type="binding site" evidence="1">
    <location>
        <begin position="166"/>
        <end position="173"/>
    </location>
    <ligand>
        <name>GTP</name>
        <dbReference type="ChEBI" id="CHEBI:37565"/>
    </ligand>
</feature>
<feature type="binding site" evidence="1">
    <location>
        <position position="173"/>
    </location>
    <ligand>
        <name>Mg(2+)</name>
        <dbReference type="ChEBI" id="CHEBI:18420"/>
    </ligand>
</feature>
<feature type="binding site" evidence="1">
    <location>
        <begin position="191"/>
        <end position="195"/>
    </location>
    <ligand>
        <name>GTP</name>
        <dbReference type="ChEBI" id="CHEBI:37565"/>
    </ligand>
</feature>
<feature type="binding site" evidence="1">
    <location>
        <position position="193"/>
    </location>
    <ligand>
        <name>Mg(2+)</name>
        <dbReference type="ChEBI" id="CHEBI:18420"/>
    </ligand>
</feature>
<feature type="binding site" evidence="1">
    <location>
        <begin position="212"/>
        <end position="215"/>
    </location>
    <ligand>
        <name>GTP</name>
        <dbReference type="ChEBI" id="CHEBI:37565"/>
    </ligand>
</feature>
<feature type="binding site" evidence="1">
    <location>
        <begin position="283"/>
        <end position="286"/>
    </location>
    <ligand>
        <name>GTP</name>
        <dbReference type="ChEBI" id="CHEBI:37565"/>
    </ligand>
</feature>
<feature type="binding site" evidence="1">
    <location>
        <begin position="314"/>
        <end position="316"/>
    </location>
    <ligand>
        <name>GTP</name>
        <dbReference type="ChEBI" id="CHEBI:37565"/>
    </ligand>
</feature>
<reference key="1">
    <citation type="journal article" date="2015" name="Genome Announc.">
        <title>Complete genome sequence of Anaeromyxobacter sp. Fw109-5, an anaerobic, metal-reducing bacterium isolated from a contaminated subsurface environment.</title>
        <authorList>
            <person name="Hwang C."/>
            <person name="Copeland A."/>
            <person name="Lucas S."/>
            <person name="Lapidus A."/>
            <person name="Barry K."/>
            <person name="Glavina Del Rio T."/>
            <person name="Dalin E."/>
            <person name="Tice H."/>
            <person name="Pitluck S."/>
            <person name="Sims D."/>
            <person name="Brettin T."/>
            <person name="Bruce D.C."/>
            <person name="Detter J.C."/>
            <person name="Han C.S."/>
            <person name="Schmutz J."/>
            <person name="Larimer F.W."/>
            <person name="Land M.L."/>
            <person name="Hauser L.J."/>
            <person name="Kyrpides N."/>
            <person name="Lykidis A."/>
            <person name="Richardson P."/>
            <person name="Belieav A."/>
            <person name="Sanford R.A."/>
            <person name="Loeffler F.E."/>
            <person name="Fields M.W."/>
        </authorList>
    </citation>
    <scope>NUCLEOTIDE SEQUENCE [LARGE SCALE GENOMIC DNA]</scope>
    <source>
        <strain>Fw109-5</strain>
    </source>
</reference>
<comment type="function">
    <text evidence="1">An essential GTPase which binds GTP, GDP and possibly (p)ppGpp with moderate affinity, with high nucleotide exchange rates and a fairly low GTP hydrolysis rate. Plays a role in control of the cell cycle, stress response, ribosome biogenesis and in those bacteria that undergo differentiation, in morphogenesis control.</text>
</comment>
<comment type="cofactor">
    <cofactor evidence="1">
        <name>Mg(2+)</name>
        <dbReference type="ChEBI" id="CHEBI:18420"/>
    </cofactor>
</comment>
<comment type="subunit">
    <text evidence="1">Monomer.</text>
</comment>
<comment type="subcellular location">
    <subcellularLocation>
        <location evidence="1">Cytoplasm</location>
    </subcellularLocation>
</comment>
<comment type="similarity">
    <text evidence="1">Belongs to the TRAFAC class OBG-HflX-like GTPase superfamily. OBG GTPase family.</text>
</comment>
<evidence type="ECO:0000255" key="1">
    <source>
        <dbReference type="HAMAP-Rule" id="MF_01454"/>
    </source>
</evidence>
<evidence type="ECO:0000255" key="2">
    <source>
        <dbReference type="PROSITE-ProRule" id="PRU01231"/>
    </source>
</evidence>
<name>OBG_ANADF</name>
<organism>
    <name type="scientific">Anaeromyxobacter sp. (strain Fw109-5)</name>
    <dbReference type="NCBI Taxonomy" id="404589"/>
    <lineage>
        <taxon>Bacteria</taxon>
        <taxon>Pseudomonadati</taxon>
        <taxon>Myxococcota</taxon>
        <taxon>Myxococcia</taxon>
        <taxon>Myxococcales</taxon>
        <taxon>Cystobacterineae</taxon>
        <taxon>Anaeromyxobacteraceae</taxon>
        <taxon>Anaeromyxobacter</taxon>
    </lineage>
</organism>
<gene>
    <name evidence="1" type="primary">obg</name>
    <name type="ordered locus">Anae109_4326</name>
</gene>
<proteinExistence type="inferred from homology"/>
<protein>
    <recommendedName>
        <fullName evidence="1">GTPase Obg</fullName>
        <ecNumber evidence="1">3.6.5.-</ecNumber>
    </recommendedName>
    <alternativeName>
        <fullName evidence="1">GTP-binding protein Obg</fullName>
    </alternativeName>
</protein>
<dbReference type="EC" id="3.6.5.-" evidence="1"/>
<dbReference type="EMBL" id="CP000769">
    <property type="protein sequence ID" value="ABS28504.1"/>
    <property type="molecule type" value="Genomic_DNA"/>
</dbReference>
<dbReference type="RefSeq" id="WP_012099149.1">
    <property type="nucleotide sequence ID" value="NC_009675.1"/>
</dbReference>
<dbReference type="SMR" id="A7HIF8"/>
<dbReference type="STRING" id="404589.Anae109_4326"/>
<dbReference type="KEGG" id="afw:Anae109_4326"/>
<dbReference type="eggNOG" id="COG0536">
    <property type="taxonomic scope" value="Bacteria"/>
</dbReference>
<dbReference type="HOGENOM" id="CLU_011747_2_0_7"/>
<dbReference type="OrthoDB" id="9807318at2"/>
<dbReference type="Proteomes" id="UP000006382">
    <property type="component" value="Chromosome"/>
</dbReference>
<dbReference type="GO" id="GO:0005737">
    <property type="term" value="C:cytoplasm"/>
    <property type="evidence" value="ECO:0007669"/>
    <property type="project" value="UniProtKB-SubCell"/>
</dbReference>
<dbReference type="GO" id="GO:0005525">
    <property type="term" value="F:GTP binding"/>
    <property type="evidence" value="ECO:0007669"/>
    <property type="project" value="UniProtKB-UniRule"/>
</dbReference>
<dbReference type="GO" id="GO:0003924">
    <property type="term" value="F:GTPase activity"/>
    <property type="evidence" value="ECO:0007669"/>
    <property type="project" value="UniProtKB-UniRule"/>
</dbReference>
<dbReference type="GO" id="GO:0000287">
    <property type="term" value="F:magnesium ion binding"/>
    <property type="evidence" value="ECO:0007669"/>
    <property type="project" value="InterPro"/>
</dbReference>
<dbReference type="GO" id="GO:0042254">
    <property type="term" value="P:ribosome biogenesis"/>
    <property type="evidence" value="ECO:0007669"/>
    <property type="project" value="UniProtKB-UniRule"/>
</dbReference>
<dbReference type="CDD" id="cd01898">
    <property type="entry name" value="Obg"/>
    <property type="match status" value="1"/>
</dbReference>
<dbReference type="FunFam" id="2.70.210.12:FF:000001">
    <property type="entry name" value="GTPase Obg"/>
    <property type="match status" value="1"/>
</dbReference>
<dbReference type="Gene3D" id="2.70.210.12">
    <property type="entry name" value="GTP1/OBG domain"/>
    <property type="match status" value="1"/>
</dbReference>
<dbReference type="Gene3D" id="3.40.50.300">
    <property type="entry name" value="P-loop containing nucleotide triphosphate hydrolases"/>
    <property type="match status" value="1"/>
</dbReference>
<dbReference type="HAMAP" id="MF_01454">
    <property type="entry name" value="GTPase_Obg"/>
    <property type="match status" value="1"/>
</dbReference>
<dbReference type="InterPro" id="IPR031167">
    <property type="entry name" value="G_OBG"/>
</dbReference>
<dbReference type="InterPro" id="IPR006073">
    <property type="entry name" value="GTP-bd"/>
</dbReference>
<dbReference type="InterPro" id="IPR014100">
    <property type="entry name" value="GTP-bd_Obg/CgtA"/>
</dbReference>
<dbReference type="InterPro" id="IPR006074">
    <property type="entry name" value="GTP1-OBG_CS"/>
</dbReference>
<dbReference type="InterPro" id="IPR006169">
    <property type="entry name" value="GTP1_OBG_dom"/>
</dbReference>
<dbReference type="InterPro" id="IPR036726">
    <property type="entry name" value="GTP1_OBG_dom_sf"/>
</dbReference>
<dbReference type="InterPro" id="IPR045086">
    <property type="entry name" value="OBG_GTPase"/>
</dbReference>
<dbReference type="InterPro" id="IPR027417">
    <property type="entry name" value="P-loop_NTPase"/>
</dbReference>
<dbReference type="NCBIfam" id="TIGR02729">
    <property type="entry name" value="Obg_CgtA"/>
    <property type="match status" value="1"/>
</dbReference>
<dbReference type="NCBIfam" id="NF008954">
    <property type="entry name" value="PRK12296.1"/>
    <property type="match status" value="1"/>
</dbReference>
<dbReference type="NCBIfam" id="NF008955">
    <property type="entry name" value="PRK12297.1"/>
    <property type="match status" value="1"/>
</dbReference>
<dbReference type="NCBIfam" id="NF008956">
    <property type="entry name" value="PRK12299.1"/>
    <property type="match status" value="1"/>
</dbReference>
<dbReference type="PANTHER" id="PTHR11702">
    <property type="entry name" value="DEVELOPMENTALLY REGULATED GTP-BINDING PROTEIN-RELATED"/>
    <property type="match status" value="1"/>
</dbReference>
<dbReference type="PANTHER" id="PTHR11702:SF31">
    <property type="entry name" value="MITOCHONDRIAL RIBOSOME-ASSOCIATED GTPASE 2"/>
    <property type="match status" value="1"/>
</dbReference>
<dbReference type="Pfam" id="PF01018">
    <property type="entry name" value="GTP1_OBG"/>
    <property type="match status" value="1"/>
</dbReference>
<dbReference type="Pfam" id="PF01926">
    <property type="entry name" value="MMR_HSR1"/>
    <property type="match status" value="1"/>
</dbReference>
<dbReference type="PIRSF" id="PIRSF002401">
    <property type="entry name" value="GTP_bd_Obg/CgtA"/>
    <property type="match status" value="1"/>
</dbReference>
<dbReference type="PRINTS" id="PR00326">
    <property type="entry name" value="GTP1OBG"/>
</dbReference>
<dbReference type="SUPFAM" id="SSF82051">
    <property type="entry name" value="Obg GTP-binding protein N-terminal domain"/>
    <property type="match status" value="1"/>
</dbReference>
<dbReference type="SUPFAM" id="SSF52540">
    <property type="entry name" value="P-loop containing nucleoside triphosphate hydrolases"/>
    <property type="match status" value="1"/>
</dbReference>
<dbReference type="PROSITE" id="PS51710">
    <property type="entry name" value="G_OBG"/>
    <property type="match status" value="1"/>
</dbReference>
<dbReference type="PROSITE" id="PS00905">
    <property type="entry name" value="GTP1_OBG"/>
    <property type="match status" value="1"/>
</dbReference>
<dbReference type="PROSITE" id="PS51883">
    <property type="entry name" value="OBG"/>
    <property type="match status" value="1"/>
</dbReference>
<keyword id="KW-0963">Cytoplasm</keyword>
<keyword id="KW-0342">GTP-binding</keyword>
<keyword id="KW-0378">Hydrolase</keyword>
<keyword id="KW-0460">Magnesium</keyword>
<keyword id="KW-0479">Metal-binding</keyword>
<keyword id="KW-0547">Nucleotide-binding</keyword>
<keyword id="KW-1185">Reference proteome</keyword>
<accession>A7HIF8</accession>